<name>HPPK_SYNY3</name>
<proteinExistence type="inferred from homology"/>
<gene>
    <name type="primary">folK</name>
    <name type="ordered locus">slr1093</name>
</gene>
<comment type="function">
    <text evidence="1">Catalyzes the transfer of pyrophosphate from adenosine triphosphate (ATP) to 6-hydroxymethyl-7,8-dihydropterin, an enzymatic step in folate biosynthesis pathway.</text>
</comment>
<comment type="catalytic activity">
    <reaction evidence="1">
        <text>6-hydroxymethyl-7,8-dihydropterin + ATP = (7,8-dihydropterin-6-yl)methyl diphosphate + AMP + H(+)</text>
        <dbReference type="Rhea" id="RHEA:11412"/>
        <dbReference type="ChEBI" id="CHEBI:15378"/>
        <dbReference type="ChEBI" id="CHEBI:30616"/>
        <dbReference type="ChEBI" id="CHEBI:44841"/>
        <dbReference type="ChEBI" id="CHEBI:72950"/>
        <dbReference type="ChEBI" id="CHEBI:456215"/>
        <dbReference type="EC" id="2.7.6.3"/>
    </reaction>
</comment>
<comment type="pathway">
    <text evidence="1">Cofactor biosynthesis; tetrahydrofolate biosynthesis; 2-amino-4-hydroxy-6-hydroxymethyl-7,8-dihydropteridine diphosphate from 7,8-dihydroneopterin triphosphate: step 4/4.</text>
</comment>
<comment type="similarity">
    <text evidence="2">Belongs to the HPPK family.</text>
</comment>
<accession>P72736</accession>
<protein>
    <recommendedName>
        <fullName evidence="1">2-amino-4-hydroxy-6-hydroxymethyldihydropteridine pyrophosphokinase</fullName>
        <ecNumber evidence="1">2.7.6.3</ecNumber>
    </recommendedName>
    <alternativeName>
        <fullName evidence="1">6-hydroxymethyl-7,8-dihydropterin pyrophosphokinase</fullName>
        <shortName evidence="1">PPPK</shortName>
    </alternativeName>
    <alternativeName>
        <fullName evidence="1">7,8-dihydro-6-hydroxymethylpterin-pyrophosphokinase</fullName>
        <shortName evidence="1">HPPK</shortName>
    </alternativeName>
</protein>
<feature type="chain" id="PRO_0000168264" description="2-amino-4-hydroxy-6-hydroxymethyldihydropteridine pyrophosphokinase">
    <location>
        <begin position="1"/>
        <end position="195"/>
    </location>
</feature>
<dbReference type="EC" id="2.7.6.3" evidence="1"/>
<dbReference type="EMBL" id="BA000022">
    <property type="protein sequence ID" value="BAA16751.1"/>
    <property type="molecule type" value="Genomic_DNA"/>
</dbReference>
<dbReference type="PIR" id="S74599">
    <property type="entry name" value="S74599"/>
</dbReference>
<dbReference type="SMR" id="P72736"/>
<dbReference type="FunCoup" id="P72736">
    <property type="interactions" value="356"/>
</dbReference>
<dbReference type="STRING" id="1148.gene:10497606"/>
<dbReference type="PaxDb" id="1148-1651824"/>
<dbReference type="EnsemblBacteria" id="BAA16751">
    <property type="protein sequence ID" value="BAA16751"/>
    <property type="gene ID" value="BAA16751"/>
</dbReference>
<dbReference type="KEGG" id="syn:slr1093"/>
<dbReference type="eggNOG" id="COG0801">
    <property type="taxonomic scope" value="Bacteria"/>
</dbReference>
<dbReference type="InParanoid" id="P72736"/>
<dbReference type="PhylomeDB" id="P72736"/>
<dbReference type="UniPathway" id="UPA00077">
    <property type="reaction ID" value="UER00155"/>
</dbReference>
<dbReference type="Proteomes" id="UP000001425">
    <property type="component" value="Chromosome"/>
</dbReference>
<dbReference type="GO" id="GO:0003848">
    <property type="term" value="F:2-amino-4-hydroxy-6-hydroxymethyldihydropteridine diphosphokinase activity"/>
    <property type="evidence" value="ECO:0007669"/>
    <property type="project" value="UniProtKB-EC"/>
</dbReference>
<dbReference type="GO" id="GO:0005524">
    <property type="term" value="F:ATP binding"/>
    <property type="evidence" value="ECO:0007669"/>
    <property type="project" value="UniProtKB-KW"/>
</dbReference>
<dbReference type="GO" id="GO:0016301">
    <property type="term" value="F:kinase activity"/>
    <property type="evidence" value="ECO:0007669"/>
    <property type="project" value="UniProtKB-KW"/>
</dbReference>
<dbReference type="GO" id="GO:0046656">
    <property type="term" value="P:folic acid biosynthetic process"/>
    <property type="evidence" value="ECO:0007669"/>
    <property type="project" value="UniProtKB-KW"/>
</dbReference>
<dbReference type="GO" id="GO:0046654">
    <property type="term" value="P:tetrahydrofolate biosynthetic process"/>
    <property type="evidence" value="ECO:0007669"/>
    <property type="project" value="UniProtKB-UniPathway"/>
</dbReference>
<dbReference type="CDD" id="cd00483">
    <property type="entry name" value="HPPK"/>
    <property type="match status" value="1"/>
</dbReference>
<dbReference type="Gene3D" id="3.30.70.560">
    <property type="entry name" value="7,8-Dihydro-6-hydroxymethylpterin-pyrophosphokinase HPPK"/>
    <property type="match status" value="1"/>
</dbReference>
<dbReference type="InterPro" id="IPR000550">
    <property type="entry name" value="Hppk"/>
</dbReference>
<dbReference type="InterPro" id="IPR035907">
    <property type="entry name" value="Hppk_sf"/>
</dbReference>
<dbReference type="NCBIfam" id="TIGR01498">
    <property type="entry name" value="folK"/>
    <property type="match status" value="1"/>
</dbReference>
<dbReference type="PANTHER" id="PTHR43071">
    <property type="entry name" value="2-AMINO-4-HYDROXY-6-HYDROXYMETHYLDIHYDROPTERIDINE PYROPHOSPHOKINASE"/>
    <property type="match status" value="1"/>
</dbReference>
<dbReference type="PANTHER" id="PTHR43071:SF1">
    <property type="entry name" value="2-AMINO-4-HYDROXY-6-HYDROXYMETHYLDIHYDROPTERIDINE PYROPHOSPHOKINASE"/>
    <property type="match status" value="1"/>
</dbReference>
<dbReference type="Pfam" id="PF01288">
    <property type="entry name" value="HPPK"/>
    <property type="match status" value="1"/>
</dbReference>
<dbReference type="SUPFAM" id="SSF55083">
    <property type="entry name" value="6-hydroxymethyl-7,8-dihydropterin pyrophosphokinase, HPPK"/>
    <property type="match status" value="1"/>
</dbReference>
<dbReference type="PROSITE" id="PS00794">
    <property type="entry name" value="HPPK"/>
    <property type="match status" value="1"/>
</dbReference>
<evidence type="ECO:0000250" key="1">
    <source>
        <dbReference type="UniProtKB" id="P26281"/>
    </source>
</evidence>
<evidence type="ECO:0000305" key="2"/>
<sequence>MAPVSPTDFPQQCHGAVVGLGGNIGPVLDNLQGAIAELALVAGIEVERCSSWYRSRAFGPPQPDYINGCVTLRVSLSPPELLQTLLAIEQKFGRIRLEKWGPRTLDLDLIFYGDRQLEQARLTIPHPQMQYRPFVLVPLAEIAPDWVDPRSGKTIIQLIEQVDCTAVWPVAPGLELGGSLEPEQVFAPGAVAVHG</sequence>
<keyword id="KW-0067">ATP-binding</keyword>
<keyword id="KW-0289">Folate biosynthesis</keyword>
<keyword id="KW-0418">Kinase</keyword>
<keyword id="KW-0547">Nucleotide-binding</keyword>
<keyword id="KW-1185">Reference proteome</keyword>
<keyword id="KW-0808">Transferase</keyword>
<organism>
    <name type="scientific">Synechocystis sp. (strain ATCC 27184 / PCC 6803 / Kazusa)</name>
    <dbReference type="NCBI Taxonomy" id="1111708"/>
    <lineage>
        <taxon>Bacteria</taxon>
        <taxon>Bacillati</taxon>
        <taxon>Cyanobacteriota</taxon>
        <taxon>Cyanophyceae</taxon>
        <taxon>Synechococcales</taxon>
        <taxon>Merismopediaceae</taxon>
        <taxon>Synechocystis</taxon>
    </lineage>
</organism>
<reference key="1">
    <citation type="journal article" date="1996" name="DNA Res.">
        <title>Sequence analysis of the genome of the unicellular cyanobacterium Synechocystis sp. strain PCC6803. II. Sequence determination of the entire genome and assignment of potential protein-coding regions.</title>
        <authorList>
            <person name="Kaneko T."/>
            <person name="Sato S."/>
            <person name="Kotani H."/>
            <person name="Tanaka A."/>
            <person name="Asamizu E."/>
            <person name="Nakamura Y."/>
            <person name="Miyajima N."/>
            <person name="Hirosawa M."/>
            <person name="Sugiura M."/>
            <person name="Sasamoto S."/>
            <person name="Kimura T."/>
            <person name="Hosouchi T."/>
            <person name="Matsuno A."/>
            <person name="Muraki A."/>
            <person name="Nakazaki N."/>
            <person name="Naruo K."/>
            <person name="Okumura S."/>
            <person name="Shimpo S."/>
            <person name="Takeuchi C."/>
            <person name="Wada T."/>
            <person name="Watanabe A."/>
            <person name="Yamada M."/>
            <person name="Yasuda M."/>
            <person name="Tabata S."/>
        </authorList>
    </citation>
    <scope>NUCLEOTIDE SEQUENCE [LARGE SCALE GENOMIC DNA]</scope>
    <source>
        <strain>ATCC 27184 / PCC 6803 / Kazusa</strain>
    </source>
</reference>